<accession>Q4FJU9</accession>
<accession>Q8C5D2</accession>
<accession>Q8VCR5</accession>
<name>TMM40_MOUSE</name>
<evidence type="ECO:0000250" key="1">
    <source>
        <dbReference type="UniProtKB" id="Q8WWA1"/>
    </source>
</evidence>
<evidence type="ECO:0000255" key="2"/>
<evidence type="ECO:0000256" key="3">
    <source>
        <dbReference type="SAM" id="MobiDB-lite"/>
    </source>
</evidence>
<evidence type="ECO:0000305" key="4"/>
<evidence type="ECO:0007744" key="5">
    <source>
    </source>
</evidence>
<comment type="subcellular location">
    <subcellularLocation>
        <location evidence="4">Membrane</location>
        <topology evidence="4">Multi-pass membrane protein</topology>
    </subcellularLocation>
</comment>
<comment type="sequence caution" evidence="4">
    <conflict type="erroneous initiation">
        <sequence resource="EMBL-CDS" id="BAC37427"/>
    </conflict>
</comment>
<feature type="chain" id="PRO_0000280359" description="Transmembrane protein 40">
    <location>
        <begin position="1"/>
        <end position="225"/>
    </location>
</feature>
<feature type="transmembrane region" description="Helical" evidence="2">
    <location>
        <begin position="152"/>
        <end position="172"/>
    </location>
</feature>
<feature type="transmembrane region" description="Helical" evidence="2">
    <location>
        <begin position="179"/>
        <end position="199"/>
    </location>
</feature>
<feature type="region of interest" description="Disordered" evidence="3">
    <location>
        <begin position="1"/>
        <end position="96"/>
    </location>
</feature>
<feature type="compositionally biased region" description="Low complexity" evidence="3">
    <location>
        <begin position="1"/>
        <end position="14"/>
    </location>
</feature>
<feature type="compositionally biased region" description="Basic and acidic residues" evidence="3">
    <location>
        <begin position="15"/>
        <end position="29"/>
    </location>
</feature>
<feature type="compositionally biased region" description="Basic residues" evidence="3">
    <location>
        <begin position="30"/>
        <end position="39"/>
    </location>
</feature>
<feature type="compositionally biased region" description="Low complexity" evidence="3">
    <location>
        <begin position="46"/>
        <end position="68"/>
    </location>
</feature>
<feature type="compositionally biased region" description="Basic residues" evidence="3">
    <location>
        <begin position="78"/>
        <end position="87"/>
    </location>
</feature>
<feature type="modified residue" description="N-acetylmethionine" evidence="1">
    <location>
        <position position="1"/>
    </location>
</feature>
<feature type="modified residue" description="Phosphoserine" evidence="5">
    <location>
        <position position="129"/>
    </location>
</feature>
<feature type="sequence conflict" description="In Ref. 3; BAC37427." evidence="4" ref="3">
    <original>G</original>
    <variation>C</variation>
    <location>
        <position position="130"/>
    </location>
</feature>
<feature type="sequence conflict" description="In Ref. 2; AAH19416." evidence="4" ref="2">
    <original>F</original>
    <variation>S</variation>
    <location>
        <position position="176"/>
    </location>
</feature>
<keyword id="KW-0007">Acetylation</keyword>
<keyword id="KW-0472">Membrane</keyword>
<keyword id="KW-0597">Phosphoprotein</keyword>
<keyword id="KW-1185">Reference proteome</keyword>
<keyword id="KW-0812">Transmembrane</keyword>
<keyword id="KW-1133">Transmembrane helix</keyword>
<sequence>MEASGSSSQSQDSGGVHRETEDHYQETELHKHHGKARERYKRDKSSSSSSSSSSSSSSSSSSSSSSSDSSDEDQPSRGPRKHRRRPRRDSLRGADHGELEVLKDELQLCGGAAGEMVPTGESGLRRRGSGSAEGEVEASQLRRLNIKKDDEFFHFVLLCFAIGALLVCYHYYADWFMSLGVGLLTFASLETIGIYFGLVYRIHSVLQGFIPLLQKFRLPGFRRTN</sequence>
<reference key="1">
    <citation type="submission" date="2005-07" db="EMBL/GenBank/DDBJ databases">
        <title>Cloning of mouse full open reading frames in Gateway(R) system entry vector (pDONR201).</title>
        <authorList>
            <person name="Ebert L."/>
            <person name="Muenstermann E."/>
            <person name="Schatten R."/>
            <person name="Henze S."/>
            <person name="Bohn E."/>
            <person name="Mollenhauer J."/>
            <person name="Wiemann S."/>
            <person name="Schick M."/>
            <person name="Korn B."/>
        </authorList>
    </citation>
    <scope>NUCLEOTIDE SEQUENCE [LARGE SCALE MRNA]</scope>
</reference>
<reference key="2">
    <citation type="journal article" date="2004" name="Genome Res.">
        <title>The status, quality, and expansion of the NIH full-length cDNA project: the Mammalian Gene Collection (MGC).</title>
        <authorList>
            <consortium name="The MGC Project Team"/>
        </authorList>
    </citation>
    <scope>NUCLEOTIDE SEQUENCE [LARGE SCALE MRNA]</scope>
    <source>
        <strain>FVB/N</strain>
        <tissue>Mammary tumor</tissue>
    </source>
</reference>
<reference key="3">
    <citation type="journal article" date="2005" name="Science">
        <title>The transcriptional landscape of the mammalian genome.</title>
        <authorList>
            <person name="Carninci P."/>
            <person name="Kasukawa T."/>
            <person name="Katayama S."/>
            <person name="Gough J."/>
            <person name="Frith M.C."/>
            <person name="Maeda N."/>
            <person name="Oyama R."/>
            <person name="Ravasi T."/>
            <person name="Lenhard B."/>
            <person name="Wells C."/>
            <person name="Kodzius R."/>
            <person name="Shimokawa K."/>
            <person name="Bajic V.B."/>
            <person name="Brenner S.E."/>
            <person name="Batalov S."/>
            <person name="Forrest A.R."/>
            <person name="Zavolan M."/>
            <person name="Davis M.J."/>
            <person name="Wilming L.G."/>
            <person name="Aidinis V."/>
            <person name="Allen J.E."/>
            <person name="Ambesi-Impiombato A."/>
            <person name="Apweiler R."/>
            <person name="Aturaliya R.N."/>
            <person name="Bailey T.L."/>
            <person name="Bansal M."/>
            <person name="Baxter L."/>
            <person name="Beisel K.W."/>
            <person name="Bersano T."/>
            <person name="Bono H."/>
            <person name="Chalk A.M."/>
            <person name="Chiu K.P."/>
            <person name="Choudhary V."/>
            <person name="Christoffels A."/>
            <person name="Clutterbuck D.R."/>
            <person name="Crowe M.L."/>
            <person name="Dalla E."/>
            <person name="Dalrymple B.P."/>
            <person name="de Bono B."/>
            <person name="Della Gatta G."/>
            <person name="di Bernardo D."/>
            <person name="Down T."/>
            <person name="Engstrom P."/>
            <person name="Fagiolini M."/>
            <person name="Faulkner G."/>
            <person name="Fletcher C.F."/>
            <person name="Fukushima T."/>
            <person name="Furuno M."/>
            <person name="Futaki S."/>
            <person name="Gariboldi M."/>
            <person name="Georgii-Hemming P."/>
            <person name="Gingeras T.R."/>
            <person name="Gojobori T."/>
            <person name="Green R.E."/>
            <person name="Gustincich S."/>
            <person name="Harbers M."/>
            <person name="Hayashi Y."/>
            <person name="Hensch T.K."/>
            <person name="Hirokawa N."/>
            <person name="Hill D."/>
            <person name="Huminiecki L."/>
            <person name="Iacono M."/>
            <person name="Ikeo K."/>
            <person name="Iwama A."/>
            <person name="Ishikawa T."/>
            <person name="Jakt M."/>
            <person name="Kanapin A."/>
            <person name="Katoh M."/>
            <person name="Kawasawa Y."/>
            <person name="Kelso J."/>
            <person name="Kitamura H."/>
            <person name="Kitano H."/>
            <person name="Kollias G."/>
            <person name="Krishnan S.P."/>
            <person name="Kruger A."/>
            <person name="Kummerfeld S.K."/>
            <person name="Kurochkin I.V."/>
            <person name="Lareau L.F."/>
            <person name="Lazarevic D."/>
            <person name="Lipovich L."/>
            <person name="Liu J."/>
            <person name="Liuni S."/>
            <person name="McWilliam S."/>
            <person name="Madan Babu M."/>
            <person name="Madera M."/>
            <person name="Marchionni L."/>
            <person name="Matsuda H."/>
            <person name="Matsuzawa S."/>
            <person name="Miki H."/>
            <person name="Mignone F."/>
            <person name="Miyake S."/>
            <person name="Morris K."/>
            <person name="Mottagui-Tabar S."/>
            <person name="Mulder N."/>
            <person name="Nakano N."/>
            <person name="Nakauchi H."/>
            <person name="Ng P."/>
            <person name="Nilsson R."/>
            <person name="Nishiguchi S."/>
            <person name="Nishikawa S."/>
            <person name="Nori F."/>
            <person name="Ohara O."/>
            <person name="Okazaki Y."/>
            <person name="Orlando V."/>
            <person name="Pang K.C."/>
            <person name="Pavan W.J."/>
            <person name="Pavesi G."/>
            <person name="Pesole G."/>
            <person name="Petrovsky N."/>
            <person name="Piazza S."/>
            <person name="Reed J."/>
            <person name="Reid J.F."/>
            <person name="Ring B.Z."/>
            <person name="Ringwald M."/>
            <person name="Rost B."/>
            <person name="Ruan Y."/>
            <person name="Salzberg S.L."/>
            <person name="Sandelin A."/>
            <person name="Schneider C."/>
            <person name="Schoenbach C."/>
            <person name="Sekiguchi K."/>
            <person name="Semple C.A."/>
            <person name="Seno S."/>
            <person name="Sessa L."/>
            <person name="Sheng Y."/>
            <person name="Shibata Y."/>
            <person name="Shimada H."/>
            <person name="Shimada K."/>
            <person name="Silva D."/>
            <person name="Sinclair B."/>
            <person name="Sperling S."/>
            <person name="Stupka E."/>
            <person name="Sugiura K."/>
            <person name="Sultana R."/>
            <person name="Takenaka Y."/>
            <person name="Taki K."/>
            <person name="Tammoja K."/>
            <person name="Tan S.L."/>
            <person name="Tang S."/>
            <person name="Taylor M.S."/>
            <person name="Tegner J."/>
            <person name="Teichmann S.A."/>
            <person name="Ueda H.R."/>
            <person name="van Nimwegen E."/>
            <person name="Verardo R."/>
            <person name="Wei C.L."/>
            <person name="Yagi K."/>
            <person name="Yamanishi H."/>
            <person name="Zabarovsky E."/>
            <person name="Zhu S."/>
            <person name="Zimmer A."/>
            <person name="Hide W."/>
            <person name="Bult C."/>
            <person name="Grimmond S.M."/>
            <person name="Teasdale R.D."/>
            <person name="Liu E.T."/>
            <person name="Brusic V."/>
            <person name="Quackenbush J."/>
            <person name="Wahlestedt C."/>
            <person name="Mattick J.S."/>
            <person name="Hume D.A."/>
            <person name="Kai C."/>
            <person name="Sasaki D."/>
            <person name="Tomaru Y."/>
            <person name="Fukuda S."/>
            <person name="Kanamori-Katayama M."/>
            <person name="Suzuki M."/>
            <person name="Aoki J."/>
            <person name="Arakawa T."/>
            <person name="Iida J."/>
            <person name="Imamura K."/>
            <person name="Itoh M."/>
            <person name="Kato T."/>
            <person name="Kawaji H."/>
            <person name="Kawagashira N."/>
            <person name="Kawashima T."/>
            <person name="Kojima M."/>
            <person name="Kondo S."/>
            <person name="Konno H."/>
            <person name="Nakano K."/>
            <person name="Ninomiya N."/>
            <person name="Nishio T."/>
            <person name="Okada M."/>
            <person name="Plessy C."/>
            <person name="Shibata K."/>
            <person name="Shiraki T."/>
            <person name="Suzuki S."/>
            <person name="Tagami M."/>
            <person name="Waki K."/>
            <person name="Watahiki A."/>
            <person name="Okamura-Oho Y."/>
            <person name="Suzuki H."/>
            <person name="Kawai J."/>
            <person name="Hayashizaki Y."/>
        </authorList>
    </citation>
    <scope>NUCLEOTIDE SEQUENCE [LARGE SCALE MRNA] OF 111-225</scope>
    <source>
        <strain>C57BL/6J</strain>
        <tissue>Colon</tissue>
    </source>
</reference>
<reference key="4">
    <citation type="journal article" date="2010" name="Cell">
        <title>A tissue-specific atlas of mouse protein phosphorylation and expression.</title>
        <authorList>
            <person name="Huttlin E.L."/>
            <person name="Jedrychowski M.P."/>
            <person name="Elias J.E."/>
            <person name="Goswami T."/>
            <person name="Rad R."/>
            <person name="Beausoleil S.A."/>
            <person name="Villen J."/>
            <person name="Haas W."/>
            <person name="Sowa M.E."/>
            <person name="Gygi S.P."/>
        </authorList>
    </citation>
    <scope>PHOSPHORYLATION [LARGE SCALE ANALYSIS] AT SER-129</scope>
    <scope>IDENTIFICATION BY MASS SPECTROMETRY [LARGE SCALE ANALYSIS]</scope>
    <source>
        <tissue>Heart</tissue>
        <tissue>Kidney</tissue>
        <tissue>Liver</tissue>
        <tissue>Lung</tissue>
        <tissue>Spleen</tissue>
    </source>
</reference>
<protein>
    <recommendedName>
        <fullName>Transmembrane protein 40</fullName>
    </recommendedName>
</protein>
<organism>
    <name type="scientific">Mus musculus</name>
    <name type="common">Mouse</name>
    <dbReference type="NCBI Taxonomy" id="10090"/>
    <lineage>
        <taxon>Eukaryota</taxon>
        <taxon>Metazoa</taxon>
        <taxon>Chordata</taxon>
        <taxon>Craniata</taxon>
        <taxon>Vertebrata</taxon>
        <taxon>Euteleostomi</taxon>
        <taxon>Mammalia</taxon>
        <taxon>Eutheria</taxon>
        <taxon>Euarchontoglires</taxon>
        <taxon>Glires</taxon>
        <taxon>Rodentia</taxon>
        <taxon>Myomorpha</taxon>
        <taxon>Muroidea</taxon>
        <taxon>Muridae</taxon>
        <taxon>Murinae</taxon>
        <taxon>Mus</taxon>
        <taxon>Mus</taxon>
    </lineage>
</organism>
<gene>
    <name type="primary">Tmem40</name>
</gene>
<dbReference type="EMBL" id="CT010303">
    <property type="protein sequence ID" value="CAJ18511.1"/>
    <property type="molecule type" value="mRNA"/>
</dbReference>
<dbReference type="EMBL" id="BC019416">
    <property type="protein sequence ID" value="AAH19416.1"/>
    <property type="molecule type" value="mRNA"/>
</dbReference>
<dbReference type="EMBL" id="AK078864">
    <property type="protein sequence ID" value="BAC37427.1"/>
    <property type="status" value="ALT_INIT"/>
    <property type="molecule type" value="mRNA"/>
</dbReference>
<dbReference type="CCDS" id="CCDS39601.1"/>
<dbReference type="RefSeq" id="NP_001161728.1">
    <property type="nucleotide sequence ID" value="NM_001168256.1"/>
</dbReference>
<dbReference type="RefSeq" id="NP_659054.2">
    <property type="nucleotide sequence ID" value="NM_144805.2"/>
</dbReference>
<dbReference type="RefSeq" id="XP_006506882.1">
    <property type="nucleotide sequence ID" value="XM_006506819.5"/>
</dbReference>
<dbReference type="RefSeq" id="XP_011239813.1">
    <property type="nucleotide sequence ID" value="XM_011241511.3"/>
</dbReference>
<dbReference type="RefSeq" id="XP_017177335.1">
    <property type="nucleotide sequence ID" value="XM_017321846.1"/>
</dbReference>
<dbReference type="BioGRID" id="220506">
    <property type="interactions" value="1"/>
</dbReference>
<dbReference type="FunCoup" id="Q4FJU9">
    <property type="interactions" value="2"/>
</dbReference>
<dbReference type="STRING" id="10090.ENSMUSP00000072704"/>
<dbReference type="iPTMnet" id="Q4FJU9"/>
<dbReference type="PhosphoSitePlus" id="Q4FJU9"/>
<dbReference type="PaxDb" id="10090-ENSMUSP00000108568"/>
<dbReference type="ProteomicsDB" id="259429"/>
<dbReference type="Antibodypedia" id="26279">
    <property type="antibodies" value="37 antibodies from 9 providers"/>
</dbReference>
<dbReference type="DNASU" id="94346"/>
<dbReference type="Ensembl" id="ENSMUST00000072933.13">
    <property type="protein sequence ID" value="ENSMUSP00000072704.7"/>
    <property type="gene ID" value="ENSMUSG00000059900.15"/>
</dbReference>
<dbReference type="Ensembl" id="ENSMUST00000166254.7">
    <property type="protein sequence ID" value="ENSMUSP00000131697.2"/>
    <property type="gene ID" value="ENSMUSG00000059900.15"/>
</dbReference>
<dbReference type="GeneID" id="94346"/>
<dbReference type="KEGG" id="mmu:94346"/>
<dbReference type="UCSC" id="uc009dja.3">
    <property type="organism name" value="mouse"/>
</dbReference>
<dbReference type="AGR" id="MGI:2137870"/>
<dbReference type="CTD" id="55287"/>
<dbReference type="MGI" id="MGI:2137870">
    <property type="gene designation" value="Tmem40"/>
</dbReference>
<dbReference type="VEuPathDB" id="HostDB:ENSMUSG00000059900"/>
<dbReference type="eggNOG" id="ENOG502SRH1">
    <property type="taxonomic scope" value="Eukaryota"/>
</dbReference>
<dbReference type="GeneTree" id="ENSGT00390000017530"/>
<dbReference type="InParanoid" id="Q4FJU9"/>
<dbReference type="OMA" id="NDEDQHP"/>
<dbReference type="PhylomeDB" id="Q4FJU9"/>
<dbReference type="BioGRID-ORCS" id="94346">
    <property type="hits" value="1 hit in 75 CRISPR screens"/>
</dbReference>
<dbReference type="ChiTaRS" id="Tmem40">
    <property type="organism name" value="mouse"/>
</dbReference>
<dbReference type="PRO" id="PR:Q4FJU9"/>
<dbReference type="Proteomes" id="UP000000589">
    <property type="component" value="Chromosome 6"/>
</dbReference>
<dbReference type="RNAct" id="Q4FJU9">
    <property type="molecule type" value="protein"/>
</dbReference>
<dbReference type="Bgee" id="ENSMUSG00000059900">
    <property type="expression patterns" value="Expressed in epithelium of lens and 155 other cell types or tissues"/>
</dbReference>
<dbReference type="ExpressionAtlas" id="Q4FJU9">
    <property type="expression patterns" value="baseline and differential"/>
</dbReference>
<dbReference type="GO" id="GO:0016020">
    <property type="term" value="C:membrane"/>
    <property type="evidence" value="ECO:0007669"/>
    <property type="project" value="UniProtKB-SubCell"/>
</dbReference>
<dbReference type="InterPro" id="IPR026181">
    <property type="entry name" value="TMEM40"/>
</dbReference>
<dbReference type="PANTHER" id="PTHR16108">
    <property type="match status" value="1"/>
</dbReference>
<dbReference type="PANTHER" id="PTHR16108:SF2">
    <property type="entry name" value="TRANSMEMBRANE PROTEIN 40"/>
    <property type="match status" value="1"/>
</dbReference>
<dbReference type="Pfam" id="PF15817">
    <property type="entry name" value="TMEM40"/>
    <property type="match status" value="1"/>
</dbReference>
<proteinExistence type="evidence at protein level"/>